<proteinExistence type="inferred from homology"/>
<organism>
    <name type="scientific">Salmonella arizonae (strain ATCC BAA-731 / CDC346-86 / RSK2980)</name>
    <dbReference type="NCBI Taxonomy" id="41514"/>
    <lineage>
        <taxon>Bacteria</taxon>
        <taxon>Pseudomonadati</taxon>
        <taxon>Pseudomonadota</taxon>
        <taxon>Gammaproteobacteria</taxon>
        <taxon>Enterobacterales</taxon>
        <taxon>Enterobacteriaceae</taxon>
        <taxon>Salmonella</taxon>
    </lineage>
</organism>
<feature type="chain" id="PRO_1000076045" description="Large-conductance mechanosensitive channel">
    <location>
        <begin position="1"/>
        <end position="137"/>
    </location>
</feature>
<feature type="transmembrane region" description="Helical" evidence="1">
    <location>
        <begin position="10"/>
        <end position="30"/>
    </location>
</feature>
<feature type="transmembrane region" description="Helical" evidence="1">
    <location>
        <begin position="76"/>
        <end position="96"/>
    </location>
</feature>
<keyword id="KW-0997">Cell inner membrane</keyword>
<keyword id="KW-1003">Cell membrane</keyword>
<keyword id="KW-0407">Ion channel</keyword>
<keyword id="KW-0406">Ion transport</keyword>
<keyword id="KW-0472">Membrane</keyword>
<keyword id="KW-1185">Reference proteome</keyword>
<keyword id="KW-0812">Transmembrane</keyword>
<keyword id="KW-1133">Transmembrane helix</keyword>
<keyword id="KW-0813">Transport</keyword>
<evidence type="ECO:0000255" key="1">
    <source>
        <dbReference type="HAMAP-Rule" id="MF_00115"/>
    </source>
</evidence>
<name>MSCL_SALAR</name>
<dbReference type="EMBL" id="CP000880">
    <property type="protein sequence ID" value="ABX24006.1"/>
    <property type="molecule type" value="Genomic_DNA"/>
</dbReference>
<dbReference type="SMR" id="A9MN76"/>
<dbReference type="STRING" id="41514.SARI_04217"/>
<dbReference type="KEGG" id="ses:SARI_04217"/>
<dbReference type="HOGENOM" id="CLU_095787_0_0_6"/>
<dbReference type="Proteomes" id="UP000002084">
    <property type="component" value="Chromosome"/>
</dbReference>
<dbReference type="GO" id="GO:0005886">
    <property type="term" value="C:plasma membrane"/>
    <property type="evidence" value="ECO:0007669"/>
    <property type="project" value="UniProtKB-SubCell"/>
</dbReference>
<dbReference type="GO" id="GO:0008381">
    <property type="term" value="F:mechanosensitive monoatomic ion channel activity"/>
    <property type="evidence" value="ECO:0007669"/>
    <property type="project" value="UniProtKB-UniRule"/>
</dbReference>
<dbReference type="FunFam" id="1.10.1200.120:FF:000001">
    <property type="entry name" value="Large-conductance mechanosensitive channel"/>
    <property type="match status" value="1"/>
</dbReference>
<dbReference type="Gene3D" id="1.10.1200.120">
    <property type="entry name" value="Large-conductance mechanosensitive channel, MscL, domain 1"/>
    <property type="match status" value="1"/>
</dbReference>
<dbReference type="HAMAP" id="MF_00115">
    <property type="entry name" value="MscL"/>
    <property type="match status" value="1"/>
</dbReference>
<dbReference type="InterPro" id="IPR019823">
    <property type="entry name" value="Mechanosensitive_channel_CS"/>
</dbReference>
<dbReference type="InterPro" id="IPR001185">
    <property type="entry name" value="MS_channel"/>
</dbReference>
<dbReference type="InterPro" id="IPR037673">
    <property type="entry name" value="MSC/AndL"/>
</dbReference>
<dbReference type="InterPro" id="IPR036019">
    <property type="entry name" value="MscL_channel"/>
</dbReference>
<dbReference type="NCBIfam" id="TIGR00220">
    <property type="entry name" value="mscL"/>
    <property type="match status" value="1"/>
</dbReference>
<dbReference type="NCBIfam" id="NF001841">
    <property type="entry name" value="PRK00567.1-1"/>
    <property type="match status" value="1"/>
</dbReference>
<dbReference type="NCBIfam" id="NF001843">
    <property type="entry name" value="PRK00567.1-4"/>
    <property type="match status" value="1"/>
</dbReference>
<dbReference type="PANTHER" id="PTHR30266:SF2">
    <property type="entry name" value="LARGE-CONDUCTANCE MECHANOSENSITIVE CHANNEL"/>
    <property type="match status" value="1"/>
</dbReference>
<dbReference type="PANTHER" id="PTHR30266">
    <property type="entry name" value="MECHANOSENSITIVE CHANNEL MSCL"/>
    <property type="match status" value="1"/>
</dbReference>
<dbReference type="Pfam" id="PF01741">
    <property type="entry name" value="MscL"/>
    <property type="match status" value="1"/>
</dbReference>
<dbReference type="PRINTS" id="PR01264">
    <property type="entry name" value="MECHCHANNEL"/>
</dbReference>
<dbReference type="SUPFAM" id="SSF81330">
    <property type="entry name" value="Gated mechanosensitive channel"/>
    <property type="match status" value="1"/>
</dbReference>
<dbReference type="PROSITE" id="PS01327">
    <property type="entry name" value="MSCL"/>
    <property type="match status" value="1"/>
</dbReference>
<protein>
    <recommendedName>
        <fullName evidence="1">Large-conductance mechanosensitive channel</fullName>
    </recommendedName>
</protein>
<sequence length="137" mass="15074">MSFIKEFREFAMRGNVVDLAVGVIIGAAFGKIVSSLVADIIMPPLGLLIGGIDFKQFAFTLREAQGDIPAVVMHYGVFIQNVFDFVIVAFAIFVAIKLINRLNRKKAEEPAAPPAPSKEEVLLGEIRDLLKEQNNRS</sequence>
<gene>
    <name evidence="1" type="primary">mscL</name>
    <name type="ordered locus">SARI_04217</name>
</gene>
<reference key="1">
    <citation type="submission" date="2007-11" db="EMBL/GenBank/DDBJ databases">
        <authorList>
            <consortium name="The Salmonella enterica serovar Arizonae Genome Sequencing Project"/>
            <person name="McClelland M."/>
            <person name="Sanderson E.K."/>
            <person name="Porwollik S."/>
            <person name="Spieth J."/>
            <person name="Clifton W.S."/>
            <person name="Fulton R."/>
            <person name="Chunyan W."/>
            <person name="Wollam A."/>
            <person name="Shah N."/>
            <person name="Pepin K."/>
            <person name="Bhonagiri V."/>
            <person name="Nash W."/>
            <person name="Johnson M."/>
            <person name="Thiruvilangam P."/>
            <person name="Wilson R."/>
        </authorList>
    </citation>
    <scope>NUCLEOTIDE SEQUENCE [LARGE SCALE GENOMIC DNA]</scope>
    <source>
        <strain>ATCC BAA-731 / CDC346-86 / RSK2980</strain>
    </source>
</reference>
<comment type="function">
    <text evidence="1">Channel that opens in response to stretch forces in the membrane lipid bilayer. May participate in the regulation of osmotic pressure changes within the cell.</text>
</comment>
<comment type="subunit">
    <text evidence="1">Homopentamer.</text>
</comment>
<comment type="subcellular location">
    <subcellularLocation>
        <location evidence="1">Cell inner membrane</location>
        <topology evidence="1">Multi-pass membrane protein</topology>
    </subcellularLocation>
</comment>
<comment type="similarity">
    <text evidence="1">Belongs to the MscL family.</text>
</comment>
<accession>A9MN76</accession>